<gene>
    <name evidence="1" type="primary">lutC</name>
    <name type="synonym">yvbY</name>
    <name type="ordered locus">RBAM_031450</name>
</gene>
<organism>
    <name type="scientific">Bacillus velezensis (strain DSM 23117 / BGSC 10A6 / LMG 26770 / FZB42)</name>
    <name type="common">Bacillus amyloliquefaciens subsp. plantarum</name>
    <dbReference type="NCBI Taxonomy" id="326423"/>
    <lineage>
        <taxon>Bacteria</taxon>
        <taxon>Bacillati</taxon>
        <taxon>Bacillota</taxon>
        <taxon>Bacilli</taxon>
        <taxon>Bacillales</taxon>
        <taxon>Bacillaceae</taxon>
        <taxon>Bacillus</taxon>
        <taxon>Bacillus amyloliquefaciens group</taxon>
    </lineage>
</organism>
<protein>
    <recommendedName>
        <fullName evidence="1">Lactate utilization protein C</fullName>
    </recommendedName>
</protein>
<accession>A7Z900</accession>
<evidence type="ECO:0000255" key="1">
    <source>
        <dbReference type="HAMAP-Rule" id="MF_02104"/>
    </source>
</evidence>
<sequence>MMMKGTVTHQESFLNRIAESLGRERRKSGVSLPEWKYQPQYQTHAGCTEDDLVTMLKDHCVNIHTELIETDAAGLYDALRTQVNRFEGGPVIIPKDSRFETYGLQTLMTEEWPDEGIPVWEWDAEQGAKNIEKAEQANVGITFSEITLAESATVVLYASEHAGRSVSLLPTTYIAIIPKSSIVPRMTQASDILKQQIRDGVTVPSCINYITGPSNSADIEMDLVVGVHGPVKAAYILVNDR</sequence>
<proteinExistence type="inferred from homology"/>
<dbReference type="EMBL" id="CP000560">
    <property type="protein sequence ID" value="ABS75476.1"/>
    <property type="molecule type" value="Genomic_DNA"/>
</dbReference>
<dbReference type="SMR" id="A7Z900"/>
<dbReference type="KEGG" id="bay:RBAM_031450"/>
<dbReference type="HOGENOM" id="CLU_090664_1_0_9"/>
<dbReference type="Proteomes" id="UP000001120">
    <property type="component" value="Chromosome"/>
</dbReference>
<dbReference type="GO" id="GO:0006089">
    <property type="term" value="P:lactate metabolic process"/>
    <property type="evidence" value="ECO:0007669"/>
    <property type="project" value="UniProtKB-UniRule"/>
</dbReference>
<dbReference type="Gene3D" id="3.40.50.10420">
    <property type="entry name" value="NagB/RpiA/CoA transferase-like"/>
    <property type="match status" value="1"/>
</dbReference>
<dbReference type="HAMAP" id="MF_02104">
    <property type="entry name" value="LutC"/>
    <property type="match status" value="1"/>
</dbReference>
<dbReference type="InterPro" id="IPR024185">
    <property type="entry name" value="FTHF_cligase-like_sf"/>
</dbReference>
<dbReference type="InterPro" id="IPR003741">
    <property type="entry name" value="LUD_dom"/>
</dbReference>
<dbReference type="InterPro" id="IPR022823">
    <property type="entry name" value="LutC"/>
</dbReference>
<dbReference type="InterPro" id="IPR037171">
    <property type="entry name" value="NagB/RpiA_transferase-like"/>
</dbReference>
<dbReference type="PANTHER" id="PTHR43682">
    <property type="entry name" value="LACTATE UTILIZATION PROTEIN C"/>
    <property type="match status" value="1"/>
</dbReference>
<dbReference type="PANTHER" id="PTHR43682:SF1">
    <property type="entry name" value="LACTATE UTILIZATION PROTEIN C"/>
    <property type="match status" value="1"/>
</dbReference>
<dbReference type="Pfam" id="PF02589">
    <property type="entry name" value="LUD_dom"/>
    <property type="match status" value="1"/>
</dbReference>
<dbReference type="SUPFAM" id="SSF100950">
    <property type="entry name" value="NagB/RpiA/CoA transferase-like"/>
    <property type="match status" value="1"/>
</dbReference>
<feature type="chain" id="PRO_0000383988" description="Lactate utilization protein C">
    <location>
        <begin position="1"/>
        <end position="241"/>
    </location>
</feature>
<name>LUTC_BACVZ</name>
<comment type="function">
    <text evidence="1">Is involved in L-lactate degradation and allows cells to grow with lactate as the sole carbon source.</text>
</comment>
<comment type="similarity">
    <text evidence="1">Belongs to the LutC/YkgG family.</text>
</comment>
<reference key="1">
    <citation type="journal article" date="2007" name="Nat. Biotechnol.">
        <title>Comparative analysis of the complete genome sequence of the plant growth-promoting bacterium Bacillus amyloliquefaciens FZB42.</title>
        <authorList>
            <person name="Chen X.H."/>
            <person name="Koumoutsi A."/>
            <person name="Scholz R."/>
            <person name="Eisenreich A."/>
            <person name="Schneider K."/>
            <person name="Heinemeyer I."/>
            <person name="Morgenstern B."/>
            <person name="Voss B."/>
            <person name="Hess W.R."/>
            <person name="Reva O."/>
            <person name="Junge H."/>
            <person name="Voigt B."/>
            <person name="Jungblut P.R."/>
            <person name="Vater J."/>
            <person name="Suessmuth R."/>
            <person name="Liesegang H."/>
            <person name="Strittmatter A."/>
            <person name="Gottschalk G."/>
            <person name="Borriss R."/>
        </authorList>
    </citation>
    <scope>NUCLEOTIDE SEQUENCE [LARGE SCALE GENOMIC DNA]</scope>
    <source>
        <strain>DSM 23117 / BGSC 10A6 / LMG 26770 / FZB42</strain>
    </source>
</reference>